<proteinExistence type="inferred from homology"/>
<dbReference type="EMBL" id="AP009256">
    <property type="protein sequence ID" value="BAF39119.1"/>
    <property type="molecule type" value="Genomic_DNA"/>
</dbReference>
<dbReference type="RefSeq" id="WP_003808052.1">
    <property type="nucleotide sequence ID" value="NZ_CAXVNC010000001.1"/>
</dbReference>
<dbReference type="SMR" id="A1A086"/>
<dbReference type="STRING" id="367928.BAD_0338"/>
<dbReference type="PaxDb" id="1680-BADO_0345"/>
<dbReference type="GeneID" id="4556651"/>
<dbReference type="KEGG" id="bad:BAD_0338"/>
<dbReference type="HOGENOM" id="CLU_065898_2_1_11"/>
<dbReference type="Proteomes" id="UP000008702">
    <property type="component" value="Chromosome"/>
</dbReference>
<dbReference type="GO" id="GO:0015935">
    <property type="term" value="C:small ribosomal subunit"/>
    <property type="evidence" value="ECO:0007669"/>
    <property type="project" value="InterPro"/>
</dbReference>
<dbReference type="GO" id="GO:0019843">
    <property type="term" value="F:rRNA binding"/>
    <property type="evidence" value="ECO:0007669"/>
    <property type="project" value="UniProtKB-UniRule"/>
</dbReference>
<dbReference type="GO" id="GO:0003735">
    <property type="term" value="F:structural constituent of ribosome"/>
    <property type="evidence" value="ECO:0007669"/>
    <property type="project" value="InterPro"/>
</dbReference>
<dbReference type="GO" id="GO:0006412">
    <property type="term" value="P:translation"/>
    <property type="evidence" value="ECO:0007669"/>
    <property type="project" value="UniProtKB-UniRule"/>
</dbReference>
<dbReference type="FunFam" id="3.30.160.20:FF:000001">
    <property type="entry name" value="30S ribosomal protein S5"/>
    <property type="match status" value="1"/>
</dbReference>
<dbReference type="FunFam" id="3.30.230.10:FF:000002">
    <property type="entry name" value="30S ribosomal protein S5"/>
    <property type="match status" value="1"/>
</dbReference>
<dbReference type="Gene3D" id="3.30.160.20">
    <property type="match status" value="1"/>
</dbReference>
<dbReference type="Gene3D" id="3.30.230.10">
    <property type="match status" value="1"/>
</dbReference>
<dbReference type="HAMAP" id="MF_01307_B">
    <property type="entry name" value="Ribosomal_uS5_B"/>
    <property type="match status" value="1"/>
</dbReference>
<dbReference type="InterPro" id="IPR020568">
    <property type="entry name" value="Ribosomal_Su5_D2-typ_SF"/>
</dbReference>
<dbReference type="InterPro" id="IPR000851">
    <property type="entry name" value="Ribosomal_uS5"/>
</dbReference>
<dbReference type="InterPro" id="IPR005712">
    <property type="entry name" value="Ribosomal_uS5_bac-type"/>
</dbReference>
<dbReference type="InterPro" id="IPR005324">
    <property type="entry name" value="Ribosomal_uS5_C"/>
</dbReference>
<dbReference type="InterPro" id="IPR013810">
    <property type="entry name" value="Ribosomal_uS5_N"/>
</dbReference>
<dbReference type="InterPro" id="IPR018192">
    <property type="entry name" value="Ribosomal_uS5_N_CS"/>
</dbReference>
<dbReference type="InterPro" id="IPR014721">
    <property type="entry name" value="Ribsml_uS5_D2-typ_fold_subgr"/>
</dbReference>
<dbReference type="NCBIfam" id="TIGR01021">
    <property type="entry name" value="rpsE_bact"/>
    <property type="match status" value="1"/>
</dbReference>
<dbReference type="PANTHER" id="PTHR48277">
    <property type="entry name" value="MITOCHONDRIAL RIBOSOMAL PROTEIN S5"/>
    <property type="match status" value="1"/>
</dbReference>
<dbReference type="PANTHER" id="PTHR48277:SF1">
    <property type="entry name" value="MITOCHONDRIAL RIBOSOMAL PROTEIN S5"/>
    <property type="match status" value="1"/>
</dbReference>
<dbReference type="Pfam" id="PF00333">
    <property type="entry name" value="Ribosomal_S5"/>
    <property type="match status" value="1"/>
</dbReference>
<dbReference type="Pfam" id="PF03719">
    <property type="entry name" value="Ribosomal_S5_C"/>
    <property type="match status" value="1"/>
</dbReference>
<dbReference type="SUPFAM" id="SSF54768">
    <property type="entry name" value="dsRNA-binding domain-like"/>
    <property type="match status" value="1"/>
</dbReference>
<dbReference type="SUPFAM" id="SSF54211">
    <property type="entry name" value="Ribosomal protein S5 domain 2-like"/>
    <property type="match status" value="1"/>
</dbReference>
<dbReference type="PROSITE" id="PS00585">
    <property type="entry name" value="RIBOSOMAL_S5"/>
    <property type="match status" value="1"/>
</dbReference>
<dbReference type="PROSITE" id="PS50881">
    <property type="entry name" value="S5_DSRBD"/>
    <property type="match status" value="1"/>
</dbReference>
<feature type="chain" id="PRO_0000323077" description="Small ribosomal subunit protein uS5">
    <location>
        <begin position="1"/>
        <end position="241"/>
    </location>
</feature>
<feature type="domain" description="S5 DRBM" evidence="1">
    <location>
        <begin position="55"/>
        <end position="118"/>
    </location>
</feature>
<feature type="region of interest" description="Disordered" evidence="2">
    <location>
        <begin position="1"/>
        <end position="53"/>
    </location>
</feature>
<feature type="compositionally biased region" description="Low complexity" evidence="2">
    <location>
        <begin position="11"/>
        <end position="22"/>
    </location>
</feature>
<feature type="compositionally biased region" description="Basic and acidic residues" evidence="2">
    <location>
        <begin position="25"/>
        <end position="53"/>
    </location>
</feature>
<protein>
    <recommendedName>
        <fullName evidence="1">Small ribosomal subunit protein uS5</fullName>
    </recommendedName>
    <alternativeName>
        <fullName evidence="3">30S ribosomal protein S5</fullName>
    </alternativeName>
</protein>
<name>RS5_BIFAA</name>
<accession>A1A086</accession>
<gene>
    <name evidence="1" type="primary">rpsE</name>
    <name type="ordered locus">BAD_0338</name>
</gene>
<reference key="1">
    <citation type="submission" date="2006-12" db="EMBL/GenBank/DDBJ databases">
        <title>Bifidobacterium adolescentis complete genome sequence.</title>
        <authorList>
            <person name="Suzuki T."/>
            <person name="Tsuda Y."/>
            <person name="Kanou N."/>
            <person name="Inoue T."/>
            <person name="Kumazaki K."/>
            <person name="Nagano S."/>
            <person name="Hirai S."/>
            <person name="Tanaka K."/>
            <person name="Watanabe K."/>
        </authorList>
    </citation>
    <scope>NUCLEOTIDE SEQUENCE [LARGE SCALE GENOMIC DNA]</scope>
    <source>
        <strain>ATCC 15703 / DSM 20083 / NCTC 11814 / E194a</strain>
    </source>
</reference>
<comment type="function">
    <text evidence="1">With S4 and S12 plays an important role in translational accuracy.</text>
</comment>
<comment type="function">
    <text evidence="1">Located at the back of the 30S subunit body where it stabilizes the conformation of the head with respect to the body.</text>
</comment>
<comment type="subunit">
    <text evidence="1">Part of the 30S ribosomal subunit. Contacts proteins S4 and S8.</text>
</comment>
<comment type="domain">
    <text>The N-terminal domain interacts with the head of the 30S subunit; the C-terminal domain interacts with the body and contacts protein S4. The interaction surface between S4 and S5 is involved in control of translational fidelity.</text>
</comment>
<comment type="similarity">
    <text evidence="1">Belongs to the universal ribosomal protein uS5 family.</text>
</comment>
<evidence type="ECO:0000255" key="1">
    <source>
        <dbReference type="HAMAP-Rule" id="MF_01307"/>
    </source>
</evidence>
<evidence type="ECO:0000256" key="2">
    <source>
        <dbReference type="SAM" id="MobiDB-lite"/>
    </source>
</evidence>
<evidence type="ECO:0000305" key="3"/>
<sequence>MSDNEKETQVAEETQNTQAAAESNNEDRKSRRGQRGEGRRGERRNRREESHENEMLDRVVTINRVSKTHKGGRTFSFAALVVVGDGKGTVGVGYGKSREVPAAIAKGQLDAKKHMFTVPRIKGTVTHPVIGHDAAGTVLLRPAAPGTGVIAGGAVRAVMECAGITDVLTKSMGSATAVNVVRATVDALKKLEEPEEIAARRGMSLEEVAPDALLRARAEGIAEARKAREEAQAKAAQKDGE</sequence>
<keyword id="KW-1185">Reference proteome</keyword>
<keyword id="KW-0687">Ribonucleoprotein</keyword>
<keyword id="KW-0689">Ribosomal protein</keyword>
<keyword id="KW-0694">RNA-binding</keyword>
<keyword id="KW-0699">rRNA-binding</keyword>
<organism>
    <name type="scientific">Bifidobacterium adolescentis (strain ATCC 15703 / DSM 20083 / NCTC 11814 / E194a)</name>
    <dbReference type="NCBI Taxonomy" id="367928"/>
    <lineage>
        <taxon>Bacteria</taxon>
        <taxon>Bacillati</taxon>
        <taxon>Actinomycetota</taxon>
        <taxon>Actinomycetes</taxon>
        <taxon>Bifidobacteriales</taxon>
        <taxon>Bifidobacteriaceae</taxon>
        <taxon>Bifidobacterium</taxon>
    </lineage>
</organism>